<evidence type="ECO:0000255" key="1">
    <source>
        <dbReference type="HAMAP-Rule" id="MF_00508"/>
    </source>
</evidence>
<evidence type="ECO:0000305" key="2"/>
<dbReference type="EMBL" id="CP000942">
    <property type="protein sequence ID" value="ACA32778.1"/>
    <property type="molecule type" value="Genomic_DNA"/>
</dbReference>
<dbReference type="RefSeq" id="WP_004025692.1">
    <property type="nucleotide sequence ID" value="NC_010503.1"/>
</dbReference>
<dbReference type="SMR" id="B1AIL9"/>
<dbReference type="GeneID" id="93848705"/>
<dbReference type="KEGG" id="upa:UPA3_0238"/>
<dbReference type="HOGENOM" id="CLU_122625_1_3_14"/>
<dbReference type="Proteomes" id="UP000002162">
    <property type="component" value="Chromosome"/>
</dbReference>
<dbReference type="GO" id="GO:1990904">
    <property type="term" value="C:ribonucleoprotein complex"/>
    <property type="evidence" value="ECO:0007669"/>
    <property type="project" value="UniProtKB-KW"/>
</dbReference>
<dbReference type="GO" id="GO:0005840">
    <property type="term" value="C:ribosome"/>
    <property type="evidence" value="ECO:0007669"/>
    <property type="project" value="UniProtKB-KW"/>
</dbReference>
<dbReference type="GO" id="GO:0003735">
    <property type="term" value="F:structural constituent of ribosome"/>
    <property type="evidence" value="ECO:0007669"/>
    <property type="project" value="InterPro"/>
</dbReference>
<dbReference type="GO" id="GO:0000049">
    <property type="term" value="F:tRNA binding"/>
    <property type="evidence" value="ECO:0007669"/>
    <property type="project" value="UniProtKB-UniRule"/>
</dbReference>
<dbReference type="GO" id="GO:0006412">
    <property type="term" value="P:translation"/>
    <property type="evidence" value="ECO:0007669"/>
    <property type="project" value="UniProtKB-UniRule"/>
</dbReference>
<dbReference type="FunFam" id="3.30.70.600:FF:000003">
    <property type="entry name" value="30S ribosomal protein S10"/>
    <property type="match status" value="1"/>
</dbReference>
<dbReference type="Gene3D" id="3.30.70.600">
    <property type="entry name" value="Ribosomal protein S10 domain"/>
    <property type="match status" value="1"/>
</dbReference>
<dbReference type="HAMAP" id="MF_00508">
    <property type="entry name" value="Ribosomal_uS10"/>
    <property type="match status" value="1"/>
</dbReference>
<dbReference type="InterPro" id="IPR001848">
    <property type="entry name" value="Ribosomal_uS10"/>
</dbReference>
<dbReference type="InterPro" id="IPR027486">
    <property type="entry name" value="Ribosomal_uS10_dom"/>
</dbReference>
<dbReference type="InterPro" id="IPR036838">
    <property type="entry name" value="Ribosomal_uS10_dom_sf"/>
</dbReference>
<dbReference type="NCBIfam" id="NF001861">
    <property type="entry name" value="PRK00596.1"/>
    <property type="match status" value="1"/>
</dbReference>
<dbReference type="NCBIfam" id="TIGR01049">
    <property type="entry name" value="rpsJ_bact"/>
    <property type="match status" value="1"/>
</dbReference>
<dbReference type="PANTHER" id="PTHR11700">
    <property type="entry name" value="30S RIBOSOMAL PROTEIN S10 FAMILY MEMBER"/>
    <property type="match status" value="1"/>
</dbReference>
<dbReference type="Pfam" id="PF00338">
    <property type="entry name" value="Ribosomal_S10"/>
    <property type="match status" value="1"/>
</dbReference>
<dbReference type="PRINTS" id="PR00971">
    <property type="entry name" value="RIBOSOMALS10"/>
</dbReference>
<dbReference type="SMART" id="SM01403">
    <property type="entry name" value="Ribosomal_S10"/>
    <property type="match status" value="1"/>
</dbReference>
<dbReference type="SUPFAM" id="SSF54999">
    <property type="entry name" value="Ribosomal protein S10"/>
    <property type="match status" value="1"/>
</dbReference>
<comment type="function">
    <text evidence="1">Involved in the binding of tRNA to the ribosomes.</text>
</comment>
<comment type="subunit">
    <text evidence="1">Part of the 30S ribosomal subunit.</text>
</comment>
<comment type="similarity">
    <text evidence="1">Belongs to the universal ribosomal protein uS10 family.</text>
</comment>
<keyword id="KW-0687">Ribonucleoprotein</keyword>
<keyword id="KW-0689">Ribosomal protein</keyword>
<reference key="1">
    <citation type="submission" date="2008-02" db="EMBL/GenBank/DDBJ databases">
        <title>Genome sequence of Ureaplasma parvum serovar 3.</title>
        <authorList>
            <person name="Methe B.A."/>
            <person name="Glass J."/>
            <person name="Waites K."/>
            <person name="Shrivastava S."/>
        </authorList>
    </citation>
    <scope>NUCLEOTIDE SEQUENCE [LARGE SCALE GENOMIC DNA]</scope>
    <source>
        <strain>ATCC 27815 / 27 / NCTC 11736</strain>
    </source>
</reference>
<proteinExistence type="inferred from homology"/>
<protein>
    <recommendedName>
        <fullName evidence="1">Small ribosomal subunit protein uS10</fullName>
    </recommendedName>
    <alternativeName>
        <fullName evidence="2">30S ribosomal protein S10</fullName>
    </alternativeName>
</protein>
<gene>
    <name evidence="1" type="primary">rpsJ</name>
    <name type="ordered locus">UPA3_0238</name>
</gene>
<name>RS10_UREP2</name>
<feature type="chain" id="PRO_1000081575" description="Small ribosomal subunit protein uS10">
    <location>
        <begin position="1"/>
        <end position="101"/>
    </location>
</feature>
<organism>
    <name type="scientific">Ureaplasma parvum serovar 3 (strain ATCC 27815 / 27 / NCTC 11736)</name>
    <dbReference type="NCBI Taxonomy" id="505682"/>
    <lineage>
        <taxon>Bacteria</taxon>
        <taxon>Bacillati</taxon>
        <taxon>Mycoplasmatota</taxon>
        <taxon>Mycoplasmoidales</taxon>
        <taxon>Mycoplasmoidaceae</taxon>
        <taxon>Ureaplasma</taxon>
    </lineage>
</organism>
<sequence>MNQELRIRLESYDHRLLDDTVKTIVNISNSTGSKLRGPIPLPTKKEIFTILRSPHVNKSSREQFERRTHKRLIILENPQPKTMEALKRLSVPFGVEVTFKI</sequence>
<accession>B1AIL9</accession>